<gene>
    <name evidence="1" type="primary">rpmJ</name>
    <name type="ordered locus">Aasi_0174</name>
</gene>
<protein>
    <recommendedName>
        <fullName evidence="1">Large ribosomal subunit protein bL36</fullName>
    </recommendedName>
    <alternativeName>
        <fullName evidence="2">50S ribosomal protein L36</fullName>
    </alternativeName>
</protein>
<sequence>MKIRSSIKKRSSGCQIVRRKGVLYVINKKNPRFKQRQG</sequence>
<organism>
    <name type="scientific">Amoebophilus asiaticus (strain 5a2)</name>
    <dbReference type="NCBI Taxonomy" id="452471"/>
    <lineage>
        <taxon>Bacteria</taxon>
        <taxon>Pseudomonadati</taxon>
        <taxon>Bacteroidota</taxon>
        <taxon>Cytophagia</taxon>
        <taxon>Cytophagales</taxon>
        <taxon>Amoebophilaceae</taxon>
        <taxon>Candidatus Amoebophilus</taxon>
    </lineage>
</organism>
<name>RL36_AMOA5</name>
<comment type="similarity">
    <text evidence="1">Belongs to the bacterial ribosomal protein bL36 family.</text>
</comment>
<dbReference type="EMBL" id="CP001102">
    <property type="status" value="NOT_ANNOTATED_CDS"/>
    <property type="molecule type" value="Genomic_DNA"/>
</dbReference>
<dbReference type="RefSeq" id="WP_044282708.1">
    <property type="nucleotide sequence ID" value="NC_010830.1"/>
</dbReference>
<dbReference type="SMR" id="B3EUK0"/>
<dbReference type="Proteomes" id="UP000001227">
    <property type="component" value="Chromosome"/>
</dbReference>
<dbReference type="GO" id="GO:1990904">
    <property type="term" value="C:ribonucleoprotein complex"/>
    <property type="evidence" value="ECO:0007669"/>
    <property type="project" value="UniProtKB-KW"/>
</dbReference>
<dbReference type="GO" id="GO:0005840">
    <property type="term" value="C:ribosome"/>
    <property type="evidence" value="ECO:0007669"/>
    <property type="project" value="UniProtKB-KW"/>
</dbReference>
<dbReference type="GO" id="GO:0003735">
    <property type="term" value="F:structural constituent of ribosome"/>
    <property type="evidence" value="ECO:0007669"/>
    <property type="project" value="InterPro"/>
</dbReference>
<dbReference type="GO" id="GO:0006412">
    <property type="term" value="P:translation"/>
    <property type="evidence" value="ECO:0007669"/>
    <property type="project" value="UniProtKB-UniRule"/>
</dbReference>
<dbReference type="HAMAP" id="MF_00251">
    <property type="entry name" value="Ribosomal_bL36"/>
    <property type="match status" value="1"/>
</dbReference>
<dbReference type="InterPro" id="IPR000473">
    <property type="entry name" value="Ribosomal_bL36"/>
</dbReference>
<dbReference type="InterPro" id="IPR035977">
    <property type="entry name" value="Ribosomal_bL36_sp"/>
</dbReference>
<dbReference type="InterPro" id="IPR047621">
    <property type="entry name" value="Ribosomal_L36_bact"/>
</dbReference>
<dbReference type="NCBIfam" id="NF002021">
    <property type="entry name" value="PRK00831.1"/>
    <property type="match status" value="1"/>
</dbReference>
<dbReference type="NCBIfam" id="TIGR01022">
    <property type="entry name" value="rpmJ_bact"/>
    <property type="match status" value="1"/>
</dbReference>
<dbReference type="PANTHER" id="PTHR47781">
    <property type="entry name" value="50S RIBOSOMAL PROTEIN L36 2"/>
    <property type="match status" value="1"/>
</dbReference>
<dbReference type="PANTHER" id="PTHR47781:SF1">
    <property type="entry name" value="LARGE RIBOSOMAL SUBUNIT PROTEIN BL36B"/>
    <property type="match status" value="1"/>
</dbReference>
<dbReference type="Pfam" id="PF00444">
    <property type="entry name" value="Ribosomal_L36"/>
    <property type="match status" value="1"/>
</dbReference>
<dbReference type="SUPFAM" id="SSF57840">
    <property type="entry name" value="Ribosomal protein L36"/>
    <property type="match status" value="1"/>
</dbReference>
<dbReference type="PROSITE" id="PS00828">
    <property type="entry name" value="RIBOSOMAL_L36"/>
    <property type="match status" value="1"/>
</dbReference>
<proteinExistence type="inferred from homology"/>
<keyword id="KW-1185">Reference proteome</keyword>
<keyword id="KW-0687">Ribonucleoprotein</keyword>
<keyword id="KW-0689">Ribosomal protein</keyword>
<feature type="chain" id="PRO_1000100997" description="Large ribosomal subunit protein bL36">
    <location>
        <begin position="1"/>
        <end position="38"/>
    </location>
</feature>
<evidence type="ECO:0000255" key="1">
    <source>
        <dbReference type="HAMAP-Rule" id="MF_00251"/>
    </source>
</evidence>
<evidence type="ECO:0000305" key="2"/>
<reference key="1">
    <citation type="journal article" date="2010" name="J. Bacteriol.">
        <title>The genome of the amoeba symbiont 'Candidatus Amoebophilus asiaticus' reveals common mechanisms for host cell interaction among amoeba-associated bacteria.</title>
        <authorList>
            <person name="Schmitz-Esser S."/>
            <person name="Tischler P."/>
            <person name="Arnold R."/>
            <person name="Montanaro J."/>
            <person name="Wagner M."/>
            <person name="Rattei T."/>
            <person name="Horn M."/>
        </authorList>
    </citation>
    <scope>NUCLEOTIDE SEQUENCE [LARGE SCALE GENOMIC DNA]</scope>
    <source>
        <strain>5a2</strain>
    </source>
</reference>
<accession>B3EUK0</accession>